<reference key="1">
    <citation type="journal article" date="2007" name="Comp. Biochem. Physiol.">
        <title>Amino acid sequence and characterization of C-type lectin purified from the snake venom of Crotalus ruber.</title>
        <authorList>
            <person name="Hamako J."/>
            <person name="Suzuki Y."/>
            <person name="Hayashi N."/>
            <person name="Kimura M."/>
            <person name="Ozeki Y."/>
            <person name="Hashimoto K."/>
            <person name="Matsui T."/>
        </authorList>
    </citation>
    <scope>PROTEIN SEQUENCE</scope>
    <scope>FUNCTION</scope>
    <scope>SUBUNIT</scope>
    <scope>SUBCELLULAR LOCATION</scope>
    <source>
        <tissue>Venom</tissue>
    </source>
</reference>
<keyword id="KW-0106">Calcium</keyword>
<keyword id="KW-0903">Direct protein sequencing</keyword>
<keyword id="KW-1015">Disulfide bond</keyword>
<keyword id="KW-0430">Lectin</keyword>
<keyword id="KW-0479">Metal-binding</keyword>
<keyword id="KW-0964">Secreted</keyword>
<protein>
    <recommendedName>
        <fullName>C-type Lectin CRL</fullName>
        <shortName>CTL</shortName>
    </recommendedName>
</protein>
<dbReference type="SMR" id="P84987"/>
<dbReference type="GO" id="GO:0005576">
    <property type="term" value="C:extracellular region"/>
    <property type="evidence" value="ECO:0007669"/>
    <property type="project" value="UniProtKB-SubCell"/>
</dbReference>
<dbReference type="GO" id="GO:0030246">
    <property type="term" value="F:carbohydrate binding"/>
    <property type="evidence" value="ECO:0007669"/>
    <property type="project" value="UniProtKB-KW"/>
</dbReference>
<dbReference type="GO" id="GO:0046872">
    <property type="term" value="F:metal ion binding"/>
    <property type="evidence" value="ECO:0007669"/>
    <property type="project" value="UniProtKB-KW"/>
</dbReference>
<dbReference type="CDD" id="cd03594">
    <property type="entry name" value="CLECT_REG-1_like"/>
    <property type="match status" value="1"/>
</dbReference>
<dbReference type="FunFam" id="3.10.100.10:FF:000015">
    <property type="entry name" value="C-type lectin Cal"/>
    <property type="match status" value="1"/>
</dbReference>
<dbReference type="Gene3D" id="3.10.100.10">
    <property type="entry name" value="Mannose-Binding Protein A, subunit A"/>
    <property type="match status" value="1"/>
</dbReference>
<dbReference type="InterPro" id="IPR001304">
    <property type="entry name" value="C-type_lectin-like"/>
</dbReference>
<dbReference type="InterPro" id="IPR016186">
    <property type="entry name" value="C-type_lectin-like/link_sf"/>
</dbReference>
<dbReference type="InterPro" id="IPR050111">
    <property type="entry name" value="C-type_lectin/snaclec_domain"/>
</dbReference>
<dbReference type="InterPro" id="IPR018378">
    <property type="entry name" value="C-type_lectin_CS"/>
</dbReference>
<dbReference type="InterPro" id="IPR016187">
    <property type="entry name" value="CTDL_fold"/>
</dbReference>
<dbReference type="PANTHER" id="PTHR22803">
    <property type="entry name" value="MANNOSE, PHOSPHOLIPASE, LECTIN RECEPTOR RELATED"/>
    <property type="match status" value="1"/>
</dbReference>
<dbReference type="Pfam" id="PF00059">
    <property type="entry name" value="Lectin_C"/>
    <property type="match status" value="1"/>
</dbReference>
<dbReference type="PRINTS" id="PR01504">
    <property type="entry name" value="PNCREATITSAP"/>
</dbReference>
<dbReference type="SMART" id="SM00034">
    <property type="entry name" value="CLECT"/>
    <property type="match status" value="1"/>
</dbReference>
<dbReference type="SUPFAM" id="SSF56436">
    <property type="entry name" value="C-type lectin-like"/>
    <property type="match status" value="1"/>
</dbReference>
<dbReference type="PROSITE" id="PS00615">
    <property type="entry name" value="C_TYPE_LECTIN_1"/>
    <property type="match status" value="1"/>
</dbReference>
<dbReference type="PROSITE" id="PS50041">
    <property type="entry name" value="C_TYPE_LECTIN_2"/>
    <property type="match status" value="1"/>
</dbReference>
<feature type="chain" id="PRO_0000263030" description="C-type Lectin CRL">
    <location>
        <begin position="1"/>
        <end position="135"/>
    </location>
</feature>
<feature type="domain" description="C-type lectin" evidence="3">
    <location>
        <begin position="10"/>
        <end position="132"/>
    </location>
</feature>
<feature type="short sequence motif" description="Galactose-binding">
    <location>
        <begin position="96"/>
        <end position="98"/>
    </location>
</feature>
<feature type="binding site" evidence="1">
    <location>
        <position position="96"/>
    </location>
    <ligand>
        <name>Ca(2+)</name>
        <dbReference type="ChEBI" id="CHEBI:29108"/>
    </ligand>
</feature>
<feature type="binding site" evidence="2">
    <location>
        <position position="98"/>
    </location>
    <ligand>
        <name>Ca(2+)</name>
        <dbReference type="ChEBI" id="CHEBI:29108"/>
    </ligand>
</feature>
<feature type="binding site" evidence="2">
    <location>
        <position position="104"/>
    </location>
    <ligand>
        <name>Ca(2+)</name>
        <dbReference type="ChEBI" id="CHEBI:29108"/>
    </ligand>
</feature>
<feature type="binding site" evidence="2">
    <location>
        <position position="119"/>
    </location>
    <ligand>
        <name>Ca(2+)</name>
        <dbReference type="ChEBI" id="CHEBI:29108"/>
    </ligand>
</feature>
<feature type="binding site" evidence="2">
    <location>
        <position position="120"/>
    </location>
    <ligand>
        <name>Ca(2+)</name>
        <dbReference type="ChEBI" id="CHEBI:29108"/>
    </ligand>
</feature>
<feature type="disulfide bond" evidence="2 3">
    <location>
        <begin position="3"/>
        <end position="14"/>
    </location>
</feature>
<feature type="disulfide bond" evidence="2 3">
    <location>
        <begin position="31"/>
        <end position="131"/>
    </location>
</feature>
<feature type="disulfide bond" evidence="2 3">
    <location>
        <begin position="38"/>
        <end position="133"/>
    </location>
</feature>
<feature type="disulfide bond" description="Interchain" evidence="2 3">
    <location>
        <position position="86"/>
    </location>
</feature>
<feature type="disulfide bond" evidence="2 3">
    <location>
        <begin position="106"/>
        <end position="123"/>
    </location>
</feature>
<organism>
    <name type="scientific">Crotalus ruber ruber</name>
    <name type="common">Red diamond rattlesnake</name>
    <dbReference type="NCBI Taxonomy" id="8736"/>
    <lineage>
        <taxon>Eukaryota</taxon>
        <taxon>Metazoa</taxon>
        <taxon>Chordata</taxon>
        <taxon>Craniata</taxon>
        <taxon>Vertebrata</taxon>
        <taxon>Euteleostomi</taxon>
        <taxon>Lepidosauria</taxon>
        <taxon>Squamata</taxon>
        <taxon>Bifurcata</taxon>
        <taxon>Unidentata</taxon>
        <taxon>Episquamata</taxon>
        <taxon>Toxicofera</taxon>
        <taxon>Serpentes</taxon>
        <taxon>Colubroidea</taxon>
        <taxon>Viperidae</taxon>
        <taxon>Crotalinae</taxon>
        <taxon>Crotalus</taxon>
    </lineage>
</organism>
<comment type="function">
    <text evidence="4">Beta-galactoside and N-acetylgalactosamine (GalNAc) specific C-type lectin.</text>
</comment>
<comment type="subunit">
    <text evidence="4">Homodimer; disulfide-linked.</text>
</comment>
<comment type="subcellular location">
    <subcellularLocation>
        <location evidence="4">Secreted</location>
    </subcellularLocation>
</comment>
<comment type="tissue specificity">
    <text>Expressed by the venom gland.</text>
</comment>
<comment type="miscellaneous">
    <text evidence="6">Negative results: does not induce platelet aggregation and does not inhibit platelet aggregation mediated by von Willebrand factor or fibrinogen with agonists.</text>
</comment>
<comment type="similarity">
    <text evidence="5">Belongs to the true venom lectin family.</text>
</comment>
<sequence length="135" mass="16274">NNCPLDWLPMNGLCYKIFNQLKTWEDAEMFCRKYKPGCHLASFHLYGESLEIAEYISDYHKGQDNVWIGLWDKKKDFSWEWTDRSCIDYLNWNKNQPDHYKNKEFCVELVSLSGYRLWNDQVCESKDAFLCQCKF</sequence>
<accession>P84987</accession>
<proteinExistence type="evidence at protein level"/>
<name>LECG_CRORU</name>
<evidence type="ECO:0000250" key="1"/>
<evidence type="ECO:0000250" key="2">
    <source>
        <dbReference type="UniProtKB" id="P21963"/>
    </source>
</evidence>
<evidence type="ECO:0000255" key="3">
    <source>
        <dbReference type="PROSITE-ProRule" id="PRU00040"/>
    </source>
</evidence>
<evidence type="ECO:0000269" key="4">
    <source>
    </source>
</evidence>
<evidence type="ECO:0000305" key="5"/>
<evidence type="ECO:0000305" key="6">
    <source>
    </source>
</evidence>